<comment type="function">
    <text evidence="6 7">Hydrolyzes glycerol-phospholipids at the terminal phosphodiesteric bond to generate phosphatidic acids (PA). Plays an important role in various cellular processes, including phytohormone action, vesicular trafficking, secretion, cytoskeletal arrangement, meiosis, tumor promotion, pathogenesis, membrane deterioration and senescence. Can use phosphatidylserine but prefers ethanolamine-containing lipids as substrates. Can use phosphatidylcholine (PC) as substrates in the presence of phosphatidylethanolamine (PE) and PIP2 (PubMed:17098468). Involved in membrane lipid modulation under aluminum (Al) stress and negatively modulate plant tolerance to Al (PubMed:22163277).</text>
</comment>
<comment type="catalytic activity">
    <reaction evidence="6">
        <text>a 1,2-diacyl-sn-glycero-3-phosphocholine + H2O = a 1,2-diacyl-sn-glycero-3-phosphate + choline + H(+)</text>
        <dbReference type="Rhea" id="RHEA:14445"/>
        <dbReference type="ChEBI" id="CHEBI:15354"/>
        <dbReference type="ChEBI" id="CHEBI:15377"/>
        <dbReference type="ChEBI" id="CHEBI:15378"/>
        <dbReference type="ChEBI" id="CHEBI:57643"/>
        <dbReference type="ChEBI" id="CHEBI:58608"/>
        <dbReference type="EC" id="3.1.4.4"/>
    </reaction>
</comment>
<comment type="cofactor">
    <cofactor evidence="6">
        <name>Ca(2+)</name>
        <dbReference type="ChEBI" id="CHEBI:29108"/>
    </cofactor>
    <text evidence="6">Ca(2+). Requires micromolar level (PIP2-dependent).</text>
</comment>
<comment type="activity regulation">
    <text>Inhibited by neomycin.</text>
</comment>
<comment type="biophysicochemical properties">
    <phDependence>
        <text evidence="6">Optimum pH is 6.5 - 7.5.</text>
    </phDependence>
</comment>
<comment type="subcellular location">
    <subcellularLocation>
        <location evidence="4">Cytoplasm</location>
    </subcellularLocation>
    <subcellularLocation>
        <location evidence="4">Membrane</location>
        <topology evidence="4">Peripheral membrane protein</topology>
    </subcellularLocation>
    <text>Found mainly associated with intracellular membranes but also with mitochondrial membranes, nuclei and clathrin-coated vesicles. Not found in chloroplast.</text>
</comment>
<comment type="alternative products">
    <event type="alternative splicing"/>
    <isoform>
        <id>Q9T051-1</id>
        <name>1</name>
        <name>PLDgamma2a</name>
        <sequence type="displayed"/>
    </isoform>
    <isoform>
        <id>Q9T051-2</id>
        <name>2</name>
        <name>PLDDgamma2b</name>
        <sequence type="described" ref="VSP_026065"/>
    </isoform>
</comment>
<comment type="tissue specificity">
    <text evidence="6">Highly expressed in roots and flowers, moderately in stems, leaves and seedlings and low in siliques. Not detected in seeds.</text>
</comment>
<comment type="induction">
    <text evidence="5 6 7">Activated by wounding, heavy metal, methyl salicylate, osmotic and salt stresses (PubMed:11090221, PubMed:17098468). Up-regulated by aluminum stress (PubMed:22163277).</text>
</comment>
<comment type="domain">
    <text evidence="10">C2 domain is a calcium-binding fold, and the binding promotes the protein association with membranes. In PLD gamma, all the calcium-coordinating acidic amino acids are conserved.</text>
</comment>
<comment type="disruption phenotype">
    <text evidence="7">No effect on tolerance to aluminum.</text>
</comment>
<comment type="similarity">
    <text evidence="10">Belongs to the phospholipase D family. C2-PLD subfamily.</text>
</comment>
<name>PLDG2_ARATH</name>
<accession>Q9T051</accession>
<accession>Q3EA52</accession>
<accession>Q9XH77</accession>
<proteinExistence type="evidence at protein level"/>
<sequence length="856" mass="96024">MSMGGGSNHEFGQWLDQQLVPLATSSGSLMVELLHGNLDIWVKEAKHLPNMICYRNKLVGGISFSELGRRIRKVDGEKSSKFTSDPYVTVSISGAVIGRTFVISNSENPVWMQHFDVPVAHSAAEVHFVVKDNDPIGSKIIGVVGIPTKQLCSGNRIEGLFPILNSSGKPCRKGAMLSLSIQYTPMERMRLYQKGVGSGVECVGVPGTYFPLRKGGRVTLYQDAHVDDGTLPSVHLDGGIQYRHGKCWEDMADAIRRARRLIYITGWSVFHPVRLVRRNNDPTEGTLGELLKVKSQEGVRVLVLVWDDPTSMSFPGFSTKGLMNTSDEETRRFFKHSSVQVLLCPRYGGKGHSFIKKSEVETIYTHHQKTMIVDAEAAQNRRKIVAFVGGLDLCNGRFDTPKHSLFGTLKTLHKDDFHNPNFVTTEDVGPREPWHDLHSKIDGPAAYDVLANFEERWMASKPRGIGKGRTSFDDSLLRINRIPDIMGLSEASSANDNDPESWHVQVFRSIDSTSVKGFPKDPEEATGRNLLCGKNILIDMSIHAAYVKAIRSAQHFIYIENQYFLGSSFNWDSNKDLGANNLIPMEIALKIANKIRARENFAAYIVIPMWPEGAPTSKPIQRILYWQHKTMQMMYQTIYKALLEVGLDGQLEPQDFLNFFCLGNREVGTREVPDGTVNVYNCPRKPPQPNAAQVQALKSRRFMIYVHSKGMVVDDEFVLIGSANINQRSLEGTRDTEIAMGGYQPHHSWAKKGSRPRGQIFGYRMSLWAEHLGFLEQEFEEPENMECVRRVRQLSELNWGQYAAEEVTEMSGHLLKYPVQVDKTGKVSSLPGCETFPDLGGKIIGSFLTLQENLTI</sequence>
<gene>
    <name evidence="8" type="primary">PLDGAMMA2</name>
    <name evidence="11" type="ordered locus">At4g11830</name>
    <name evidence="12" type="ORF">T26M18.40</name>
</gene>
<evidence type="ECO:0000250" key="1">
    <source>
        <dbReference type="UniProtKB" id="Q38882"/>
    </source>
</evidence>
<evidence type="ECO:0000255" key="2">
    <source>
        <dbReference type="PROSITE-ProRule" id="PRU00041"/>
    </source>
</evidence>
<evidence type="ECO:0000255" key="3">
    <source>
        <dbReference type="PROSITE-ProRule" id="PRU00153"/>
    </source>
</evidence>
<evidence type="ECO:0000269" key="4">
    <source>
    </source>
</evidence>
<evidence type="ECO:0000269" key="5">
    <source>
    </source>
</evidence>
<evidence type="ECO:0000269" key="6">
    <source>
    </source>
</evidence>
<evidence type="ECO:0000269" key="7">
    <source>
    </source>
</evidence>
<evidence type="ECO:0000303" key="8">
    <source>
    </source>
</evidence>
<evidence type="ECO:0000303" key="9">
    <source ref="1"/>
</evidence>
<evidence type="ECO:0000305" key="10"/>
<evidence type="ECO:0000312" key="11">
    <source>
        <dbReference type="Araport" id="AT4G11830"/>
    </source>
</evidence>
<evidence type="ECO:0000312" key="12">
    <source>
        <dbReference type="EMBL" id="CAB44321.1"/>
    </source>
</evidence>
<keyword id="KW-0025">Alternative splicing</keyword>
<keyword id="KW-0106">Calcium</keyword>
<keyword id="KW-0963">Cytoplasm</keyword>
<keyword id="KW-0378">Hydrolase</keyword>
<keyword id="KW-0442">Lipid degradation</keyword>
<keyword id="KW-0443">Lipid metabolism</keyword>
<keyword id="KW-0472">Membrane</keyword>
<keyword id="KW-0479">Metal-binding</keyword>
<keyword id="KW-1185">Reference proteome</keyword>
<keyword id="KW-0677">Repeat</keyword>
<reference key="1">
    <citation type="online journal article" date="1999" name="Plant Gene Register">
        <title>Isolation and nucleotide sequence of the fourth phospholipase D, PLD-gamma 2, from Arabidopsis thaliana.</title>
        <authorList>
            <person name="Qin W."/>
            <person name="Dyer J.H."/>
            <person name="Zheng L."/>
            <person name="Wang X."/>
        </authorList>
        <locator>PGR99-084</locator>
    </citation>
    <scope>NUCLEOTIDE SEQUENCE [MRNA] (ISOFORM 2)</scope>
    <source>
        <strain>cv. Columbia</strain>
    </source>
</reference>
<reference key="2">
    <citation type="submission" date="2006-06" db="EMBL/GenBank/DDBJ databases">
        <authorList>
            <person name="Qin W."/>
            <person name="Dyer J.H."/>
            <person name="Zheng L."/>
            <person name="Wang X."/>
        </authorList>
    </citation>
    <scope>SEQUENCE REVISION</scope>
    <source>
        <strain>cv. Columbia</strain>
    </source>
</reference>
<reference key="3">
    <citation type="journal article" date="2006" name="Biochim. Biophys. Acta">
        <title>Expression and characterization of Arabidopsis phospholipase Dgamma2.</title>
        <authorList>
            <person name="Qin C."/>
            <person name="Li M."/>
            <person name="Qin W."/>
            <person name="Bahn S.C."/>
            <person name="Wang C."/>
            <person name="Wang X."/>
        </authorList>
    </citation>
    <scope>NUCLEOTIDE SEQUENCE [MRNA] (ISOFORM 1)</scope>
    <scope>FUNCTION</scope>
    <scope>CATALYTIC ACTIVITY</scope>
    <scope>COFACTOR</scope>
    <scope>BIOPHYSICOCHEMICAL PROPERTIES</scope>
    <scope>TISSUE SPECIFICITY</scope>
    <scope>INDUCTION BY WOUNDING</scope>
</reference>
<reference key="4">
    <citation type="journal article" date="1999" name="Nature">
        <title>Sequence and analysis of chromosome 4 of the plant Arabidopsis thaliana.</title>
        <authorList>
            <person name="Mayer K.F.X."/>
            <person name="Schueller C."/>
            <person name="Wambutt R."/>
            <person name="Murphy G."/>
            <person name="Volckaert G."/>
            <person name="Pohl T."/>
            <person name="Duesterhoeft A."/>
            <person name="Stiekema W."/>
            <person name="Entian K.-D."/>
            <person name="Terryn N."/>
            <person name="Harris B."/>
            <person name="Ansorge W."/>
            <person name="Brandt P."/>
            <person name="Grivell L.A."/>
            <person name="Rieger M."/>
            <person name="Weichselgartner M."/>
            <person name="de Simone V."/>
            <person name="Obermaier B."/>
            <person name="Mache R."/>
            <person name="Mueller M."/>
            <person name="Kreis M."/>
            <person name="Delseny M."/>
            <person name="Puigdomenech P."/>
            <person name="Watson M."/>
            <person name="Schmidtheini T."/>
            <person name="Reichert B."/>
            <person name="Portetelle D."/>
            <person name="Perez-Alonso M."/>
            <person name="Boutry M."/>
            <person name="Bancroft I."/>
            <person name="Vos P."/>
            <person name="Hoheisel J."/>
            <person name="Zimmermann W."/>
            <person name="Wedler H."/>
            <person name="Ridley P."/>
            <person name="Langham S.-A."/>
            <person name="McCullagh B."/>
            <person name="Bilham L."/>
            <person name="Robben J."/>
            <person name="van der Schueren J."/>
            <person name="Grymonprez B."/>
            <person name="Chuang Y.-J."/>
            <person name="Vandenbussche F."/>
            <person name="Braeken M."/>
            <person name="Weltjens I."/>
            <person name="Voet M."/>
            <person name="Bastiaens I."/>
            <person name="Aert R."/>
            <person name="Defoor E."/>
            <person name="Weitzenegger T."/>
            <person name="Bothe G."/>
            <person name="Ramsperger U."/>
            <person name="Hilbert H."/>
            <person name="Braun M."/>
            <person name="Holzer E."/>
            <person name="Brandt A."/>
            <person name="Peters S."/>
            <person name="van Staveren M."/>
            <person name="Dirkse W."/>
            <person name="Mooijman P."/>
            <person name="Klein Lankhorst R."/>
            <person name="Rose M."/>
            <person name="Hauf J."/>
            <person name="Koetter P."/>
            <person name="Berneiser S."/>
            <person name="Hempel S."/>
            <person name="Feldpausch M."/>
            <person name="Lamberth S."/>
            <person name="Van den Daele H."/>
            <person name="De Keyser A."/>
            <person name="Buysshaert C."/>
            <person name="Gielen J."/>
            <person name="Villarroel R."/>
            <person name="De Clercq R."/>
            <person name="van Montagu M."/>
            <person name="Rogers J."/>
            <person name="Cronin A."/>
            <person name="Quail M.A."/>
            <person name="Bray-Allen S."/>
            <person name="Clark L."/>
            <person name="Doggett J."/>
            <person name="Hall S."/>
            <person name="Kay M."/>
            <person name="Lennard N."/>
            <person name="McLay K."/>
            <person name="Mayes R."/>
            <person name="Pettett A."/>
            <person name="Rajandream M.A."/>
            <person name="Lyne M."/>
            <person name="Benes V."/>
            <person name="Rechmann S."/>
            <person name="Borkova D."/>
            <person name="Bloecker H."/>
            <person name="Scharfe M."/>
            <person name="Grimm M."/>
            <person name="Loehnert T.-H."/>
            <person name="Dose S."/>
            <person name="de Haan M."/>
            <person name="Maarse A.C."/>
            <person name="Schaefer M."/>
            <person name="Mueller-Auer S."/>
            <person name="Gabel C."/>
            <person name="Fuchs M."/>
            <person name="Fartmann B."/>
            <person name="Granderath K."/>
            <person name="Dauner D."/>
            <person name="Herzl A."/>
            <person name="Neumann S."/>
            <person name="Argiriou A."/>
            <person name="Vitale D."/>
            <person name="Liguori R."/>
            <person name="Piravandi E."/>
            <person name="Massenet O."/>
            <person name="Quigley F."/>
            <person name="Clabauld G."/>
            <person name="Muendlein A."/>
            <person name="Felber R."/>
            <person name="Schnabl S."/>
            <person name="Hiller R."/>
            <person name="Schmidt W."/>
            <person name="Lecharny A."/>
            <person name="Aubourg S."/>
            <person name="Chefdor F."/>
            <person name="Cooke R."/>
            <person name="Berger C."/>
            <person name="Monfort A."/>
            <person name="Casacuberta E."/>
            <person name="Gibbons T."/>
            <person name="Weber N."/>
            <person name="Vandenbol M."/>
            <person name="Bargues M."/>
            <person name="Terol J."/>
            <person name="Torres A."/>
            <person name="Perez-Perez A."/>
            <person name="Purnelle B."/>
            <person name="Bent E."/>
            <person name="Johnson S."/>
            <person name="Tacon D."/>
            <person name="Jesse T."/>
            <person name="Heijnen L."/>
            <person name="Schwarz S."/>
            <person name="Scholler P."/>
            <person name="Heber S."/>
            <person name="Francs P."/>
            <person name="Bielke C."/>
            <person name="Frishman D."/>
            <person name="Haase D."/>
            <person name="Lemcke K."/>
            <person name="Mewes H.-W."/>
            <person name="Stocker S."/>
            <person name="Zaccaria P."/>
            <person name="Bevan M."/>
            <person name="Wilson R.K."/>
            <person name="de la Bastide M."/>
            <person name="Habermann K."/>
            <person name="Parnell L."/>
            <person name="Dedhia N."/>
            <person name="Gnoj L."/>
            <person name="Schutz K."/>
            <person name="Huang E."/>
            <person name="Spiegel L."/>
            <person name="Sekhon M."/>
            <person name="Murray J."/>
            <person name="Sheet P."/>
            <person name="Cordes M."/>
            <person name="Abu-Threideh J."/>
            <person name="Stoneking T."/>
            <person name="Kalicki J."/>
            <person name="Graves T."/>
            <person name="Harmon G."/>
            <person name="Edwards J."/>
            <person name="Latreille P."/>
            <person name="Courtney L."/>
            <person name="Cloud J."/>
            <person name="Abbott A."/>
            <person name="Scott K."/>
            <person name="Johnson D."/>
            <person name="Minx P."/>
            <person name="Bentley D."/>
            <person name="Fulton B."/>
            <person name="Miller N."/>
            <person name="Greco T."/>
            <person name="Kemp K."/>
            <person name="Kramer J."/>
            <person name="Fulton L."/>
            <person name="Mardis E."/>
            <person name="Dante M."/>
            <person name="Pepin K."/>
            <person name="Hillier L.W."/>
            <person name="Nelson J."/>
            <person name="Spieth J."/>
            <person name="Ryan E."/>
            <person name="Andrews S."/>
            <person name="Geisel C."/>
            <person name="Layman D."/>
            <person name="Du H."/>
            <person name="Ali J."/>
            <person name="Berghoff A."/>
            <person name="Jones K."/>
            <person name="Drone K."/>
            <person name="Cotton M."/>
            <person name="Joshu C."/>
            <person name="Antonoiu B."/>
            <person name="Zidanic M."/>
            <person name="Strong C."/>
            <person name="Sun H."/>
            <person name="Lamar B."/>
            <person name="Yordan C."/>
            <person name="Ma P."/>
            <person name="Zhong J."/>
            <person name="Preston R."/>
            <person name="Vil D."/>
            <person name="Shekher M."/>
            <person name="Matero A."/>
            <person name="Shah R."/>
            <person name="Swaby I.K."/>
            <person name="O'Shaughnessy A."/>
            <person name="Rodriguez M."/>
            <person name="Hoffman J."/>
            <person name="Till S."/>
            <person name="Granat S."/>
            <person name="Shohdy N."/>
            <person name="Hasegawa A."/>
            <person name="Hameed A."/>
            <person name="Lodhi M."/>
            <person name="Johnson A."/>
            <person name="Chen E."/>
            <person name="Marra M.A."/>
            <person name="Martienssen R."/>
            <person name="McCombie W.R."/>
        </authorList>
    </citation>
    <scope>NUCLEOTIDE SEQUENCE [LARGE SCALE GENOMIC DNA]</scope>
    <source>
        <strain>cv. Columbia</strain>
    </source>
</reference>
<reference key="5">
    <citation type="journal article" date="2017" name="Plant J.">
        <title>Araport11: a complete reannotation of the Arabidopsis thaliana reference genome.</title>
        <authorList>
            <person name="Cheng C.Y."/>
            <person name="Krishnakumar V."/>
            <person name="Chan A.P."/>
            <person name="Thibaud-Nissen F."/>
            <person name="Schobel S."/>
            <person name="Town C.D."/>
        </authorList>
    </citation>
    <scope>GENOME REANNOTATION</scope>
    <source>
        <strain>cv. Columbia</strain>
    </source>
</reference>
<reference key="6">
    <citation type="journal article" date="1999" name="Plant Physiol.">
        <title>Subcellular distribution and tissue expression of phospholipase Dalpha, Dbeta, and Dgamma in Arabidopsis.</title>
        <authorList>
            <person name="Fan L."/>
            <person name="Zheng S."/>
            <person name="Cui D."/>
            <person name="Wang X."/>
        </authorList>
    </citation>
    <scope>SUBCELLULAR LOCATION</scope>
</reference>
<reference key="7">
    <citation type="journal article" date="2000" name="Plant Cell">
        <title>Involvement of phospholipase D in wound-induced accumulation of jasmonic acid in arabidopsis.</title>
        <authorList>
            <person name="Wang C."/>
            <person name="Zien C.A."/>
            <person name="Afitlhile M."/>
            <person name="Welti R."/>
            <person name="Hildebrand D.F."/>
            <person name="Wang X."/>
        </authorList>
    </citation>
    <scope>INDUCTION BY WOUNDING</scope>
</reference>
<reference key="8">
    <citation type="journal article" date="2002" name="Plant Physiol.">
        <title>The Arabidopsis phospholipase D family. Characterization of a calcium-independent and phosphatidylcholine-selective PLD zeta 1 with distinct regulatory domains.</title>
        <authorList>
            <person name="Qin C."/>
            <person name="Wang X."/>
        </authorList>
    </citation>
    <scope>GENE FAMILY</scope>
    <scope>NOMENCLATURE</scope>
</reference>
<reference key="9">
    <citation type="journal article" date="2011" name="PLoS ONE">
        <title>Suppression of phospholipase Dgammas confers increased aluminum resistance in Arabidopsis thaliana.</title>
        <authorList>
            <person name="Zhao J."/>
            <person name="Wang C."/>
            <person name="Bedair M."/>
            <person name="Welti R."/>
            <person name="Sumner L.W."/>
            <person name="Baxter I."/>
            <person name="Wang X."/>
        </authorList>
    </citation>
    <scope>FUNCTION</scope>
    <scope>INDUCTION BY ALUMINUM</scope>
    <scope>DISRUPTION PHENOTYPE</scope>
</reference>
<feature type="chain" id="PRO_0000218813" description="Phospholipase D gamma 2">
    <location>
        <begin position="1"/>
        <end position="856"/>
    </location>
</feature>
<feature type="domain" description="C2" evidence="2">
    <location>
        <begin position="21"/>
        <end position="161"/>
    </location>
</feature>
<feature type="domain" description="PLD phosphodiesterase 1" evidence="3">
    <location>
        <begin position="362"/>
        <end position="397"/>
    </location>
</feature>
<feature type="domain" description="PLD phosphodiesterase 2" evidence="3">
    <location>
        <begin position="702"/>
        <end position="729"/>
    </location>
</feature>
<feature type="active site" evidence="3">
    <location>
        <position position="367"/>
    </location>
</feature>
<feature type="active site" evidence="3">
    <location>
        <position position="369"/>
    </location>
</feature>
<feature type="active site" evidence="3">
    <location>
        <position position="374"/>
    </location>
</feature>
<feature type="active site" evidence="3">
    <location>
        <position position="707"/>
    </location>
</feature>
<feature type="active site" evidence="3">
    <location>
        <position position="709"/>
    </location>
</feature>
<feature type="active site" evidence="3">
    <location>
        <position position="714"/>
    </location>
</feature>
<feature type="binding site" evidence="1">
    <location>
        <position position="223"/>
    </location>
    <ligand>
        <name>Ca(2+)</name>
        <dbReference type="ChEBI" id="CHEBI:29108"/>
    </ligand>
</feature>
<feature type="binding site" evidence="1">
    <location>
        <position position="367"/>
    </location>
    <ligand>
        <name>a 1,2-diacyl-sn-glycero-3-phosphate</name>
        <dbReference type="ChEBI" id="CHEBI:58608"/>
    </ligand>
</feature>
<feature type="binding site" evidence="1">
    <location>
        <position position="403"/>
    </location>
    <ligand>
        <name>Ca(2+)</name>
        <dbReference type="ChEBI" id="CHEBI:29108"/>
    </ligand>
</feature>
<feature type="binding site" evidence="1">
    <location>
        <position position="435"/>
    </location>
    <ligand>
        <name>Ca(2+)</name>
        <dbReference type="ChEBI" id="CHEBI:29108"/>
    </ligand>
</feature>
<feature type="binding site" evidence="1">
    <location>
        <position position="562"/>
    </location>
    <ligand>
        <name>a 1,2-diacyl-sn-glycero-3-phosphate</name>
        <dbReference type="ChEBI" id="CHEBI:58608"/>
    </ligand>
</feature>
<feature type="binding site" evidence="1">
    <location>
        <position position="707"/>
    </location>
    <ligand>
        <name>a 1,2-diacyl-sn-glycero-3-phosphate</name>
        <dbReference type="ChEBI" id="CHEBI:58608"/>
    </ligand>
</feature>
<feature type="binding site" evidence="1">
    <location>
        <position position="770"/>
    </location>
    <ligand>
        <name>Ca(2+)</name>
        <dbReference type="ChEBI" id="CHEBI:29108"/>
    </ligand>
</feature>
<feature type="splice variant" id="VSP_026065" description="In isoform 2." evidence="9">
    <location>
        <begin position="37"/>
        <end position="68"/>
    </location>
</feature>
<organism>
    <name type="scientific">Arabidopsis thaliana</name>
    <name type="common">Mouse-ear cress</name>
    <dbReference type="NCBI Taxonomy" id="3702"/>
    <lineage>
        <taxon>Eukaryota</taxon>
        <taxon>Viridiplantae</taxon>
        <taxon>Streptophyta</taxon>
        <taxon>Embryophyta</taxon>
        <taxon>Tracheophyta</taxon>
        <taxon>Spermatophyta</taxon>
        <taxon>Magnoliopsida</taxon>
        <taxon>eudicotyledons</taxon>
        <taxon>Gunneridae</taxon>
        <taxon>Pentapetalae</taxon>
        <taxon>rosids</taxon>
        <taxon>malvids</taxon>
        <taxon>Brassicales</taxon>
        <taxon>Brassicaceae</taxon>
        <taxon>Camelineae</taxon>
        <taxon>Arabidopsis</taxon>
    </lineage>
</organism>
<dbReference type="EC" id="3.1.4.4" evidence="6"/>
<dbReference type="EMBL" id="AF138281">
    <property type="protein sequence ID" value="AAD38519.2"/>
    <property type="molecule type" value="mRNA"/>
</dbReference>
<dbReference type="EMBL" id="DQ812124">
    <property type="protein sequence ID" value="ABG88077.1"/>
    <property type="molecule type" value="mRNA"/>
</dbReference>
<dbReference type="EMBL" id="AL078606">
    <property type="protein sequence ID" value="CAB44321.1"/>
    <property type="molecule type" value="Genomic_DNA"/>
</dbReference>
<dbReference type="EMBL" id="AL161532">
    <property type="protein sequence ID" value="CAB78226.1"/>
    <property type="molecule type" value="Genomic_DNA"/>
</dbReference>
<dbReference type="EMBL" id="CP002687">
    <property type="protein sequence ID" value="AEE83054.1"/>
    <property type="molecule type" value="Genomic_DNA"/>
</dbReference>
<dbReference type="EMBL" id="CP002687">
    <property type="protein sequence ID" value="AEE83055.1"/>
    <property type="molecule type" value="Genomic_DNA"/>
</dbReference>
<dbReference type="PIR" id="T09342">
    <property type="entry name" value="T09342"/>
</dbReference>
<dbReference type="RefSeq" id="NP_192920.3">
    <molecule id="Q9T051-1"/>
    <property type="nucleotide sequence ID" value="NM_117252.6"/>
</dbReference>
<dbReference type="RefSeq" id="NP_849539.1">
    <molecule id="Q9T051-2"/>
    <property type="nucleotide sequence ID" value="NM_179208.3"/>
</dbReference>
<dbReference type="SMR" id="Q9T051"/>
<dbReference type="BioGRID" id="12087">
    <property type="interactions" value="1"/>
</dbReference>
<dbReference type="FunCoup" id="Q9T051">
    <property type="interactions" value="203"/>
</dbReference>
<dbReference type="STRING" id="3702.Q9T051"/>
<dbReference type="PaxDb" id="3702-AT4G11830.2"/>
<dbReference type="ProteomicsDB" id="234726">
    <molecule id="Q9T051-1"/>
</dbReference>
<dbReference type="EnsemblPlants" id="AT4G11830.1">
    <molecule id="Q9T051-2"/>
    <property type="protein sequence ID" value="AT4G11830.1"/>
    <property type="gene ID" value="AT4G11830"/>
</dbReference>
<dbReference type="EnsemblPlants" id="AT4G11830.2">
    <molecule id="Q9T051-1"/>
    <property type="protein sequence ID" value="AT4G11830.2"/>
    <property type="gene ID" value="AT4G11830"/>
</dbReference>
<dbReference type="GeneID" id="826789"/>
<dbReference type="Gramene" id="AT4G11830.1">
    <molecule id="Q9T051-2"/>
    <property type="protein sequence ID" value="AT4G11830.1"/>
    <property type="gene ID" value="AT4G11830"/>
</dbReference>
<dbReference type="Gramene" id="AT4G11830.2">
    <molecule id="Q9T051-1"/>
    <property type="protein sequence ID" value="AT4G11830.2"/>
    <property type="gene ID" value="AT4G11830"/>
</dbReference>
<dbReference type="KEGG" id="ath:AT4G11830"/>
<dbReference type="Araport" id="AT4G11830"/>
<dbReference type="TAIR" id="AT4G11830">
    <property type="gene designation" value="PLDGAMMA2"/>
</dbReference>
<dbReference type="eggNOG" id="KOG1329">
    <property type="taxonomic scope" value="Eukaryota"/>
</dbReference>
<dbReference type="InParanoid" id="Q9T051"/>
<dbReference type="PhylomeDB" id="Q9T051"/>
<dbReference type="BioCyc" id="ARA:AT4G11830-MONOMER"/>
<dbReference type="BRENDA" id="3.1.4.4">
    <property type="organism ID" value="399"/>
</dbReference>
<dbReference type="PRO" id="PR:Q9T051"/>
<dbReference type="Proteomes" id="UP000006548">
    <property type="component" value="Chromosome 4"/>
</dbReference>
<dbReference type="ExpressionAtlas" id="Q9T051">
    <property type="expression patterns" value="baseline and differential"/>
</dbReference>
<dbReference type="GO" id="GO:0022626">
    <property type="term" value="C:cytosolic ribosome"/>
    <property type="evidence" value="ECO:0007005"/>
    <property type="project" value="TAIR"/>
</dbReference>
<dbReference type="GO" id="GO:0016020">
    <property type="term" value="C:membrane"/>
    <property type="evidence" value="ECO:0007669"/>
    <property type="project" value="UniProtKB-SubCell"/>
</dbReference>
<dbReference type="GO" id="GO:0005509">
    <property type="term" value="F:calcium ion binding"/>
    <property type="evidence" value="ECO:0007669"/>
    <property type="project" value="InterPro"/>
</dbReference>
<dbReference type="GO" id="GO:0004630">
    <property type="term" value="F:phospholipase D activity"/>
    <property type="evidence" value="ECO:0007669"/>
    <property type="project" value="UniProtKB-EC"/>
</dbReference>
<dbReference type="GO" id="GO:0016042">
    <property type="term" value="P:lipid catabolic process"/>
    <property type="evidence" value="ECO:0007669"/>
    <property type="project" value="UniProtKB-KW"/>
</dbReference>
<dbReference type="GO" id="GO:0006643">
    <property type="term" value="P:membrane lipid metabolic process"/>
    <property type="evidence" value="ECO:0000315"/>
    <property type="project" value="TAIR"/>
</dbReference>
<dbReference type="GO" id="GO:0046470">
    <property type="term" value="P:phosphatidylcholine metabolic process"/>
    <property type="evidence" value="ECO:0007669"/>
    <property type="project" value="InterPro"/>
</dbReference>
<dbReference type="GO" id="GO:0006979">
    <property type="term" value="P:response to oxidative stress"/>
    <property type="evidence" value="ECO:0000315"/>
    <property type="project" value="TAIR"/>
</dbReference>
<dbReference type="CDD" id="cd04015">
    <property type="entry name" value="C2_plant_PLD"/>
    <property type="match status" value="1"/>
</dbReference>
<dbReference type="FunFam" id="3.30.870.10:FF:000027">
    <property type="entry name" value="Phospholipase D"/>
    <property type="match status" value="1"/>
</dbReference>
<dbReference type="FunFam" id="2.60.40.150:FF:000193">
    <property type="entry name" value="Phospholipase D delta"/>
    <property type="match status" value="1"/>
</dbReference>
<dbReference type="FunFam" id="3.30.870.10:FF:000025">
    <property type="entry name" value="Phospholipase D delta"/>
    <property type="match status" value="1"/>
</dbReference>
<dbReference type="Gene3D" id="2.60.40.150">
    <property type="entry name" value="C2 domain"/>
    <property type="match status" value="1"/>
</dbReference>
<dbReference type="Gene3D" id="3.30.870.10">
    <property type="entry name" value="Endonuclease Chain A"/>
    <property type="match status" value="2"/>
</dbReference>
<dbReference type="InterPro" id="IPR000008">
    <property type="entry name" value="C2_dom"/>
</dbReference>
<dbReference type="InterPro" id="IPR035892">
    <property type="entry name" value="C2_domain_sf"/>
</dbReference>
<dbReference type="InterPro" id="IPR001736">
    <property type="entry name" value="PLipase_D/transphosphatidylase"/>
</dbReference>
<dbReference type="InterPro" id="IPR024632">
    <property type="entry name" value="PLipase_D_C"/>
</dbReference>
<dbReference type="InterPro" id="IPR015679">
    <property type="entry name" value="PLipase_D_fam"/>
</dbReference>
<dbReference type="InterPro" id="IPR011402">
    <property type="entry name" value="PLipase_D_pln"/>
</dbReference>
<dbReference type="PANTHER" id="PTHR18896">
    <property type="entry name" value="PHOSPHOLIPASE D"/>
    <property type="match status" value="1"/>
</dbReference>
<dbReference type="PANTHER" id="PTHR18896:SF130">
    <property type="entry name" value="PHOSPHOLIPASE D GAMMA 2-RELATED"/>
    <property type="match status" value="1"/>
</dbReference>
<dbReference type="Pfam" id="PF00168">
    <property type="entry name" value="C2"/>
    <property type="match status" value="1"/>
</dbReference>
<dbReference type="Pfam" id="PF12357">
    <property type="entry name" value="PLD_C"/>
    <property type="match status" value="1"/>
</dbReference>
<dbReference type="Pfam" id="PF00614">
    <property type="entry name" value="PLDc"/>
    <property type="match status" value="2"/>
</dbReference>
<dbReference type="PIRSF" id="PIRSF036470">
    <property type="entry name" value="PLD_plant"/>
    <property type="match status" value="1"/>
</dbReference>
<dbReference type="SMART" id="SM00239">
    <property type="entry name" value="C2"/>
    <property type="match status" value="1"/>
</dbReference>
<dbReference type="SMART" id="SM00155">
    <property type="entry name" value="PLDc"/>
    <property type="match status" value="2"/>
</dbReference>
<dbReference type="SUPFAM" id="SSF49562">
    <property type="entry name" value="C2 domain (Calcium/lipid-binding domain, CaLB)"/>
    <property type="match status" value="1"/>
</dbReference>
<dbReference type="SUPFAM" id="SSF56024">
    <property type="entry name" value="Phospholipase D/nuclease"/>
    <property type="match status" value="2"/>
</dbReference>
<dbReference type="PROSITE" id="PS50004">
    <property type="entry name" value="C2"/>
    <property type="match status" value="1"/>
</dbReference>
<dbReference type="PROSITE" id="PS50035">
    <property type="entry name" value="PLD"/>
    <property type="match status" value="2"/>
</dbReference>
<protein>
    <recommendedName>
        <fullName evidence="8">Phospholipase D gamma 2</fullName>
        <shortName evidence="8">AtPLDgamma2</shortName>
        <shortName evidence="8">PLD gamma 2</shortName>
        <ecNumber evidence="6">3.1.4.4</ecNumber>
    </recommendedName>
</protein>